<proteinExistence type="evidence at protein level"/>
<accession>Q7V8T1</accession>
<protein>
    <recommendedName>
        <fullName evidence="4 5">Lantipeptide prochlorosin 1.1</fullName>
        <shortName evidence="4 5">Lantipeptide Pcn1.1</shortName>
    </recommendedName>
</protein>
<name>LAN11_PROMM</name>
<reference key="1">
    <citation type="journal article" date="2003" name="Nature">
        <title>Genome divergence in two Prochlorococcus ecotypes reflects oceanic niche differentiation.</title>
        <authorList>
            <person name="Rocap G."/>
            <person name="Larimer F.W."/>
            <person name="Lamerdin J.E."/>
            <person name="Malfatti S."/>
            <person name="Chain P."/>
            <person name="Ahlgren N.A."/>
            <person name="Arellano A."/>
            <person name="Coleman M."/>
            <person name="Hauser L."/>
            <person name="Hess W.R."/>
            <person name="Johnson Z.I."/>
            <person name="Land M.L."/>
            <person name="Lindell D."/>
            <person name="Post A.F."/>
            <person name="Regala W."/>
            <person name="Shah M."/>
            <person name="Shaw S.L."/>
            <person name="Steglich C."/>
            <person name="Sullivan M.B."/>
            <person name="Ting C.S."/>
            <person name="Tolonen A."/>
            <person name="Webb E.A."/>
            <person name="Zinser E.R."/>
            <person name="Chisholm S.W."/>
        </authorList>
    </citation>
    <scope>NUCLEOTIDE SEQUENCE [LARGE SCALE GENOMIC DNA]</scope>
    <source>
        <strain>MIT 9313</strain>
    </source>
</reference>
<reference key="2">
    <citation type="journal article" date="2010" name="Proc. Natl. Acad. Sci. U.S.A.">
        <title>Catalytic promiscuity in the biosynthesis of cyclic peptide secondary metabolites in planktonic marine cyanobacteria.</title>
        <authorList>
            <person name="Li B."/>
            <person name="Sher D."/>
            <person name="Kelly L."/>
            <person name="Shi Y."/>
            <person name="Huang K."/>
            <person name="Knerr P.J."/>
            <person name="Joewono I."/>
            <person name="Rusch D."/>
            <person name="Chisholm S.W."/>
            <person name="van der Donk W.A."/>
        </authorList>
    </citation>
    <scope>LANTHIONINE CROSS-LINKS</scope>
    <scope>INDUCTION BY NITROGEN STARVATION</scope>
    <scope>FUNCTION</scope>
    <source>
        <strain>MIT 9313</strain>
    </source>
</reference>
<reference key="3">
    <citation type="journal article" date="2012" name="Biochemistry">
        <title>Structural characterization of four prochlorosins: a novel class of lantipeptides produced by planktonic marine cyanobacteria.</title>
        <authorList>
            <person name="Tang W."/>
            <person name="van der Donk W.A."/>
        </authorList>
    </citation>
    <scope>STRUCTURE BY NMR OF 66-81</scope>
    <scope>EXPRESSION IN E.COLI</scope>
    <scope>LANTHIONINE CROSS-LINKS</scope>
    <source>
        <strain>MIT 9313</strain>
    </source>
</reference>
<dbReference type="EMBL" id="BX548175">
    <property type="protein sequence ID" value="CAE20422.1"/>
    <property type="status" value="ALT_INIT"/>
    <property type="molecule type" value="Genomic_DNA"/>
</dbReference>
<dbReference type="RefSeq" id="WP_052646211.1">
    <property type="nucleotide sequence ID" value="NC_005071.1"/>
</dbReference>
<dbReference type="PDB" id="6VHJ">
    <property type="method" value="NMR"/>
    <property type="chains" value="A=66-81"/>
</dbReference>
<dbReference type="PDBsum" id="6VHJ"/>
<dbReference type="SMR" id="Q7V8T1"/>
<dbReference type="KEGG" id="pmt:PMT_0247"/>
<dbReference type="HOGENOM" id="CLU_158613_2_0_3"/>
<dbReference type="OrthoDB" id="542288at2"/>
<dbReference type="Proteomes" id="UP000001423">
    <property type="component" value="Chromosome"/>
</dbReference>
<dbReference type="GO" id="GO:0005576">
    <property type="term" value="C:extracellular region"/>
    <property type="evidence" value="ECO:0007669"/>
    <property type="project" value="UniProtKB-SubCell"/>
</dbReference>
<dbReference type="InterPro" id="IPR022516">
    <property type="entry name" value="CHP03798_Ocin"/>
</dbReference>
<dbReference type="InterPro" id="IPR012903">
    <property type="entry name" value="Nif11"/>
</dbReference>
<dbReference type="NCBIfam" id="TIGR03798">
    <property type="entry name" value="leader_Nif11"/>
    <property type="match status" value="1"/>
</dbReference>
<dbReference type="Pfam" id="PF07862">
    <property type="entry name" value="Nif11"/>
    <property type="match status" value="1"/>
</dbReference>
<organism>
    <name type="scientific">Prochlorococcus marinus (strain MIT 9313)</name>
    <dbReference type="NCBI Taxonomy" id="74547"/>
    <lineage>
        <taxon>Bacteria</taxon>
        <taxon>Bacillati</taxon>
        <taxon>Cyanobacteriota</taxon>
        <taxon>Cyanophyceae</taxon>
        <taxon>Synechococcales</taxon>
        <taxon>Prochlorococcaceae</taxon>
        <taxon>Prochlorococcus</taxon>
    </lineage>
</organism>
<keyword id="KW-0002">3D-structure</keyword>
<keyword id="KW-1185">Reference proteome</keyword>
<keyword id="KW-0964">Secreted</keyword>
<keyword id="KW-0883">Thioether bond</keyword>
<feature type="propeptide" id="PRO_0000450371" evidence="7 8">
    <location>
        <begin position="1"/>
        <end position="65"/>
    </location>
</feature>
<feature type="peptide" id="PRO_0000450372" description="Lantipeptide prochlorosin 1.1" evidence="7 8">
    <location>
        <begin position="66"/>
        <end position="81"/>
    </location>
</feature>
<feature type="cross-link" description="Beta-methyllanthionine (Cys-Thr)" evidence="3 7">
    <location>
        <begin position="68"/>
        <end position="72"/>
    </location>
</feature>
<feature type="cross-link" description="Beta-methyllanthionine (Thr-Cys)" evidence="3 7">
    <location>
        <begin position="77"/>
        <end position="81"/>
    </location>
</feature>
<comment type="function">
    <text evidence="2 6 7 8">Lanthionine-containing peptide (lantipeptide) with unknown function (Probable). Does not show antibiotic activity against Lactococcus lactis 117 and Bacillus subtilis 6633 bacteria (PubMed:20479271). Organisms that produce this peptide live in oligotrophic environments at very dilute concentrations, suggesting this peptide is not secreted to influence other bacteria (Probable).</text>
</comment>
<comment type="subcellular location">
    <subcellularLocation>
        <location evidence="6">Secreted</location>
    </subcellularLocation>
</comment>
<comment type="induction">
    <text evidence="2">Down-regulated under nitrogen starvation.</text>
</comment>
<comment type="PTM">
    <text evidence="3">Cross-links are proved in vitro, when coepressed in E.coli with the ProcM lanthionine synthetase.</text>
</comment>
<comment type="PTM">
    <text evidence="3">The beta-methyllanthionine residues have a DL configuration (with 2S,3S,6R stereochemistry).</text>
</comment>
<comment type="PTM">
    <text evidence="1 8">Maturation of prochlorosin involves the enzymatic conversion of Thr, and Ser into dehydrated AA and the formation of thioether bonds with cysteines. This is followed by membrane translocation and cleavage of the modified precursor.</text>
</comment>
<comment type="sequence caution" evidence="8">
    <conflict type="erroneous initiation">
        <sequence resource="EMBL-CDS" id="CAE20422"/>
    </conflict>
    <text>Truncated N-terminus.</text>
</comment>
<sequence>MSEEQLKAFIAKVQADTSLQEQLKAEGADVVAIAKAAGFSITTEDLEKEHRQTLSDDDLEGVAGGFFCVQGTANRFTINVC</sequence>
<gene>
    <name evidence="4 5" type="primary">ProcA1.1</name>
    <name evidence="9" type="ordered locus">PMT_0247</name>
</gene>
<evidence type="ECO:0000250" key="1">
    <source>
        <dbReference type="UniProtKB" id="H2A7G5"/>
    </source>
</evidence>
<evidence type="ECO:0000269" key="2">
    <source>
    </source>
</evidence>
<evidence type="ECO:0000269" key="3">
    <source>
    </source>
</evidence>
<evidence type="ECO:0000303" key="4">
    <source>
    </source>
</evidence>
<evidence type="ECO:0000303" key="5">
    <source>
    </source>
</evidence>
<evidence type="ECO:0000305" key="6"/>
<evidence type="ECO:0000305" key="7">
    <source>
    </source>
</evidence>
<evidence type="ECO:0000305" key="8">
    <source>
    </source>
</evidence>
<evidence type="ECO:0000312" key="9">
    <source>
        <dbReference type="EMBL" id="CAE20422.1"/>
    </source>
</evidence>